<gene>
    <name type="primary">exbD</name>
</gene>
<keyword id="KW-0997">Cell inner membrane</keyword>
<keyword id="KW-1003">Cell membrane</keyword>
<keyword id="KW-0472">Membrane</keyword>
<keyword id="KW-0653">Protein transport</keyword>
<keyword id="KW-0812">Transmembrane</keyword>
<keyword id="KW-1133">Transmembrane helix</keyword>
<keyword id="KW-0813">Transport</keyword>
<name>EXBD_NEIMC</name>
<proteinExistence type="inferred from homology"/>
<accession>P0A0S0</accession>
<accession>P95376</accession>
<dbReference type="EMBL" id="U77738">
    <property type="protein sequence ID" value="AAC44836.1"/>
    <property type="molecule type" value="Genomic_DNA"/>
</dbReference>
<dbReference type="SMR" id="P0A0S0"/>
<dbReference type="OMA" id="PYGLVMD"/>
<dbReference type="GO" id="GO:0005886">
    <property type="term" value="C:plasma membrane"/>
    <property type="evidence" value="ECO:0007669"/>
    <property type="project" value="UniProtKB-SubCell"/>
</dbReference>
<dbReference type="GO" id="GO:0022857">
    <property type="term" value="F:transmembrane transporter activity"/>
    <property type="evidence" value="ECO:0007669"/>
    <property type="project" value="InterPro"/>
</dbReference>
<dbReference type="GO" id="GO:0015031">
    <property type="term" value="P:protein transport"/>
    <property type="evidence" value="ECO:0007669"/>
    <property type="project" value="UniProtKB-KW"/>
</dbReference>
<dbReference type="Gene3D" id="3.30.420.270">
    <property type="match status" value="1"/>
</dbReference>
<dbReference type="InterPro" id="IPR003400">
    <property type="entry name" value="ExbD"/>
</dbReference>
<dbReference type="PANTHER" id="PTHR30558:SF12">
    <property type="entry name" value="BIOPOLYMER TRANSPORT PROTEIN EXBD"/>
    <property type="match status" value="1"/>
</dbReference>
<dbReference type="PANTHER" id="PTHR30558">
    <property type="entry name" value="EXBD MEMBRANE COMPONENT OF PMF-DRIVEN MACROMOLECULE IMPORT SYSTEM"/>
    <property type="match status" value="1"/>
</dbReference>
<dbReference type="Pfam" id="PF02472">
    <property type="entry name" value="ExbD"/>
    <property type="match status" value="1"/>
</dbReference>
<feature type="chain" id="PRO_0000129127" description="Biopolymer transport protein ExbD">
    <location>
        <begin position="1"/>
        <end position="144"/>
    </location>
</feature>
<feature type="topological domain" description="Cytoplasmic" evidence="2">
    <location>
        <begin position="1"/>
        <end position="18"/>
    </location>
</feature>
<feature type="transmembrane region" description="Helical" evidence="2">
    <location>
        <begin position="19"/>
        <end position="39"/>
    </location>
</feature>
<feature type="topological domain" description="Periplasmic" evidence="2">
    <location>
        <begin position="40"/>
        <end position="144"/>
    </location>
</feature>
<reference key="1">
    <citation type="journal article" date="1997" name="J. Bacteriol.">
        <title>Neisseria meningitidis tonB, exbB, and exbD genes: Ton-dependent utilization of protein-bound iron in Neisseriae.</title>
        <authorList>
            <person name="Stojiljkovic I."/>
            <person name="Srinivasan N."/>
        </authorList>
    </citation>
    <scope>NUCLEOTIDE SEQUENCE [GENOMIC DNA]</scope>
    <source>
        <strain>8013.6 / Serogroup C</strain>
    </source>
</reference>
<organism>
    <name type="scientific">Neisseria meningitidis serogroup C</name>
    <dbReference type="NCBI Taxonomy" id="135720"/>
    <lineage>
        <taxon>Bacteria</taxon>
        <taxon>Pseudomonadati</taxon>
        <taxon>Pseudomonadota</taxon>
        <taxon>Betaproteobacteria</taxon>
        <taxon>Neisseriales</taxon>
        <taxon>Neisseriaceae</taxon>
        <taxon>Neisseria</taxon>
    </lineage>
</organism>
<sequence>MAFGSMNSGDDSPMSDINVTPLVDVMLVLLIVFMITMPVLTHSIPLELPTASEQTNKQDKQPKDPLRLTIDANGGYYVGGDSASKVEIGEVESRLKAAKEQNENVIVAIAADKAVEYDYVNKALEAARQAGITKIGFVTETKAQ</sequence>
<protein>
    <recommendedName>
        <fullName>Biopolymer transport protein ExbD</fullName>
    </recommendedName>
</protein>
<evidence type="ECO:0000250" key="1"/>
<evidence type="ECO:0000255" key="2"/>
<evidence type="ECO:0000305" key="3"/>
<comment type="function">
    <text evidence="1">Involved in the TonB-dependent energy-dependent transport of various receptor-bound substrates.</text>
</comment>
<comment type="subunit">
    <text evidence="1">The accessory proteins ExbB and ExbD seem to form a complex with TonB.</text>
</comment>
<comment type="subcellular location">
    <subcellularLocation>
        <location evidence="3">Cell inner membrane</location>
        <topology evidence="3">Single-pass type II membrane protein</topology>
    </subcellularLocation>
</comment>
<comment type="similarity">
    <text evidence="3">Belongs to the ExbD/TolR family.</text>
</comment>